<comment type="function">
    <text evidence="1">Binds to the 23S rRNA.</text>
</comment>
<comment type="cofactor">
    <cofactor evidence="1">
        <name>Zn(2+)</name>
        <dbReference type="ChEBI" id="CHEBI:29105"/>
    </cofactor>
    <text evidence="1">Binds 1 zinc ion per subunit.</text>
</comment>
<comment type="subunit">
    <text evidence="1">Part of the 50S ribosomal subunit. Forms a cluster with proteins L3 and L14.</text>
</comment>
<comment type="similarity">
    <text evidence="1">Belongs to the eukaryotic ribosomal protein eL24 family.</text>
</comment>
<evidence type="ECO:0000255" key="1">
    <source>
        <dbReference type="HAMAP-Rule" id="MF_00773"/>
    </source>
</evidence>
<evidence type="ECO:0000305" key="2"/>
<organism>
    <name type="scientific">Halobacterium salinarum (strain ATCC 29341 / DSM 671 / R1)</name>
    <dbReference type="NCBI Taxonomy" id="478009"/>
    <lineage>
        <taxon>Archaea</taxon>
        <taxon>Methanobacteriati</taxon>
        <taxon>Methanobacteriota</taxon>
        <taxon>Stenosarchaea group</taxon>
        <taxon>Halobacteria</taxon>
        <taxon>Halobacteriales</taxon>
        <taxon>Halobacteriaceae</taxon>
        <taxon>Halobacterium</taxon>
        <taxon>Halobacterium salinarum NRC-34001</taxon>
    </lineage>
</organism>
<proteinExistence type="inferred from homology"/>
<keyword id="KW-0479">Metal-binding</keyword>
<keyword id="KW-0687">Ribonucleoprotein</keyword>
<keyword id="KW-0689">Ribosomal protein</keyword>
<keyword id="KW-0694">RNA-binding</keyword>
<keyword id="KW-0699">rRNA-binding</keyword>
<keyword id="KW-0862">Zinc</keyword>
<keyword id="KW-0863">Zinc-finger</keyword>
<accession>B0R501</accession>
<sequence length="62" mass="7000">MVQTRSCDYCGDDIEPGTGTMFVHNDGSTVHFCSAKCEKNADLGREPRDVEWTDEEEVEETQ</sequence>
<reference key="1">
    <citation type="journal article" date="2008" name="Genomics">
        <title>Evolution in the laboratory: the genome of Halobacterium salinarum strain R1 compared to that of strain NRC-1.</title>
        <authorList>
            <person name="Pfeiffer F."/>
            <person name="Schuster S.C."/>
            <person name="Broicher A."/>
            <person name="Falb M."/>
            <person name="Palm P."/>
            <person name="Rodewald K."/>
            <person name="Ruepp A."/>
            <person name="Soppa J."/>
            <person name="Tittor J."/>
            <person name="Oesterhelt D."/>
        </authorList>
    </citation>
    <scope>NUCLEOTIDE SEQUENCE [LARGE SCALE GENOMIC DNA]</scope>
    <source>
        <strain>ATCC 29341 / DSM 671 / R1</strain>
    </source>
</reference>
<dbReference type="EMBL" id="AM774415">
    <property type="protein sequence ID" value="CAP13816.1"/>
    <property type="molecule type" value="Genomic_DNA"/>
</dbReference>
<dbReference type="RefSeq" id="WP_010902834.1">
    <property type="nucleotide sequence ID" value="NC_010364.1"/>
</dbReference>
<dbReference type="SMR" id="B0R501"/>
<dbReference type="EnsemblBacteria" id="CAP13816">
    <property type="protein sequence ID" value="CAP13816"/>
    <property type="gene ID" value="OE_2665F"/>
</dbReference>
<dbReference type="KEGG" id="hsl:OE_2665F"/>
<dbReference type="HOGENOM" id="CLU_190191_0_0_2"/>
<dbReference type="PhylomeDB" id="B0R501"/>
<dbReference type="Proteomes" id="UP000001321">
    <property type="component" value="Chromosome"/>
</dbReference>
<dbReference type="GO" id="GO:1990904">
    <property type="term" value="C:ribonucleoprotein complex"/>
    <property type="evidence" value="ECO:0007669"/>
    <property type="project" value="UniProtKB-KW"/>
</dbReference>
<dbReference type="GO" id="GO:0005840">
    <property type="term" value="C:ribosome"/>
    <property type="evidence" value="ECO:0007669"/>
    <property type="project" value="UniProtKB-KW"/>
</dbReference>
<dbReference type="GO" id="GO:0019843">
    <property type="term" value="F:rRNA binding"/>
    <property type="evidence" value="ECO:0007669"/>
    <property type="project" value="UniProtKB-UniRule"/>
</dbReference>
<dbReference type="GO" id="GO:0003735">
    <property type="term" value="F:structural constituent of ribosome"/>
    <property type="evidence" value="ECO:0007669"/>
    <property type="project" value="InterPro"/>
</dbReference>
<dbReference type="GO" id="GO:0008270">
    <property type="term" value="F:zinc ion binding"/>
    <property type="evidence" value="ECO:0007669"/>
    <property type="project" value="UniProtKB-UniRule"/>
</dbReference>
<dbReference type="GO" id="GO:0006412">
    <property type="term" value="P:translation"/>
    <property type="evidence" value="ECO:0007669"/>
    <property type="project" value="UniProtKB-UniRule"/>
</dbReference>
<dbReference type="CDD" id="cd00472">
    <property type="entry name" value="Ribosomal_L24e_L24"/>
    <property type="match status" value="1"/>
</dbReference>
<dbReference type="FunFam" id="2.30.170.20:FF:000013">
    <property type="entry name" value="50S ribosomal protein L24e"/>
    <property type="match status" value="1"/>
</dbReference>
<dbReference type="Gene3D" id="2.30.170.20">
    <property type="entry name" value="Ribosomal protein L24e"/>
    <property type="match status" value="1"/>
</dbReference>
<dbReference type="HAMAP" id="MF_00773">
    <property type="entry name" value="Ribosomal_eL24"/>
    <property type="match status" value="1"/>
</dbReference>
<dbReference type="InterPro" id="IPR038630">
    <property type="entry name" value="L24e/L24_sf"/>
</dbReference>
<dbReference type="InterPro" id="IPR055345">
    <property type="entry name" value="Ribosomal_eL24-rel_arc"/>
</dbReference>
<dbReference type="InterPro" id="IPR000988">
    <property type="entry name" value="Ribosomal_eL24-rel_N"/>
</dbReference>
<dbReference type="InterPro" id="IPR023442">
    <property type="entry name" value="Ribosomal_eL24_CS"/>
</dbReference>
<dbReference type="InterPro" id="IPR011017">
    <property type="entry name" value="TRASH_dom"/>
</dbReference>
<dbReference type="NCBIfam" id="NF034186">
    <property type="entry name" value="PRK14891.1-1"/>
    <property type="match status" value="1"/>
</dbReference>
<dbReference type="Pfam" id="PF01246">
    <property type="entry name" value="Ribosomal_L24e"/>
    <property type="match status" value="1"/>
</dbReference>
<dbReference type="SMART" id="SM00746">
    <property type="entry name" value="TRASH"/>
    <property type="match status" value="1"/>
</dbReference>
<dbReference type="SUPFAM" id="SSF57716">
    <property type="entry name" value="Glucocorticoid receptor-like (DNA-binding domain)"/>
    <property type="match status" value="1"/>
</dbReference>
<dbReference type="PROSITE" id="PS01073">
    <property type="entry name" value="RIBOSOMAL_L24E"/>
    <property type="match status" value="1"/>
</dbReference>
<protein>
    <recommendedName>
        <fullName evidence="1">Large ribosomal subunit protein eL24</fullName>
    </recommendedName>
    <alternativeName>
        <fullName evidence="2">50S ribosomal protein L24e</fullName>
    </alternativeName>
</protein>
<gene>
    <name evidence="1" type="primary">rpl24e</name>
    <name type="ordered locus">OE_2665F</name>
</gene>
<name>RL24E_HALS3</name>
<feature type="chain" id="PRO_1000193986" description="Large ribosomal subunit protein eL24">
    <location>
        <begin position="1"/>
        <end position="62"/>
    </location>
</feature>
<feature type="zinc finger region" description="C4-type" evidence="1">
    <location>
        <begin position="7"/>
        <end position="37"/>
    </location>
</feature>
<feature type="binding site" evidence="1">
    <location>
        <position position="7"/>
    </location>
    <ligand>
        <name>Zn(2+)</name>
        <dbReference type="ChEBI" id="CHEBI:29105"/>
    </ligand>
</feature>
<feature type="binding site" evidence="1">
    <location>
        <position position="10"/>
    </location>
    <ligand>
        <name>Zn(2+)</name>
        <dbReference type="ChEBI" id="CHEBI:29105"/>
    </ligand>
</feature>
<feature type="binding site" evidence="1">
    <location>
        <position position="33"/>
    </location>
    <ligand>
        <name>Zn(2+)</name>
        <dbReference type="ChEBI" id="CHEBI:29105"/>
    </ligand>
</feature>
<feature type="binding site" evidence="1">
    <location>
        <position position="37"/>
    </location>
    <ligand>
        <name>Zn(2+)</name>
        <dbReference type="ChEBI" id="CHEBI:29105"/>
    </ligand>
</feature>